<comment type="function">
    <text evidence="1">Catalyzes the synthesis of GMP from XMP.</text>
</comment>
<comment type="catalytic activity">
    <reaction evidence="1">
        <text>XMP + L-glutamine + ATP + H2O = GMP + L-glutamate + AMP + diphosphate + 2 H(+)</text>
        <dbReference type="Rhea" id="RHEA:11680"/>
        <dbReference type="ChEBI" id="CHEBI:15377"/>
        <dbReference type="ChEBI" id="CHEBI:15378"/>
        <dbReference type="ChEBI" id="CHEBI:29985"/>
        <dbReference type="ChEBI" id="CHEBI:30616"/>
        <dbReference type="ChEBI" id="CHEBI:33019"/>
        <dbReference type="ChEBI" id="CHEBI:57464"/>
        <dbReference type="ChEBI" id="CHEBI:58115"/>
        <dbReference type="ChEBI" id="CHEBI:58359"/>
        <dbReference type="ChEBI" id="CHEBI:456215"/>
        <dbReference type="EC" id="6.3.5.2"/>
    </reaction>
</comment>
<comment type="pathway">
    <text evidence="1">Purine metabolism; GMP biosynthesis; GMP from XMP (L-Gln route): step 1/1.</text>
</comment>
<comment type="subunit">
    <text evidence="1">Homodimer.</text>
</comment>
<organism>
    <name type="scientific">Haemophilus influenzae (strain 86-028NP)</name>
    <dbReference type="NCBI Taxonomy" id="281310"/>
    <lineage>
        <taxon>Bacteria</taxon>
        <taxon>Pseudomonadati</taxon>
        <taxon>Pseudomonadota</taxon>
        <taxon>Gammaproteobacteria</taxon>
        <taxon>Pasteurellales</taxon>
        <taxon>Pasteurellaceae</taxon>
        <taxon>Haemophilus</taxon>
    </lineage>
</organism>
<gene>
    <name evidence="1" type="primary">guaA</name>
    <name type="ordered locus">NTHI0326</name>
</gene>
<dbReference type="EC" id="6.3.5.2" evidence="1"/>
<dbReference type="EMBL" id="CP000057">
    <property type="protein sequence ID" value="AAX87283.1"/>
    <property type="molecule type" value="Genomic_DNA"/>
</dbReference>
<dbReference type="RefSeq" id="WP_005648785.1">
    <property type="nucleotide sequence ID" value="NC_007146.2"/>
</dbReference>
<dbReference type="SMR" id="Q4QNW4"/>
<dbReference type="MEROPS" id="C26.957"/>
<dbReference type="GeneID" id="93219165"/>
<dbReference type="KEGG" id="hit:NTHI0326"/>
<dbReference type="HOGENOM" id="CLU_014340_0_5_6"/>
<dbReference type="UniPathway" id="UPA00189">
    <property type="reaction ID" value="UER00296"/>
</dbReference>
<dbReference type="Proteomes" id="UP000002525">
    <property type="component" value="Chromosome"/>
</dbReference>
<dbReference type="GO" id="GO:0005829">
    <property type="term" value="C:cytosol"/>
    <property type="evidence" value="ECO:0007669"/>
    <property type="project" value="TreeGrafter"/>
</dbReference>
<dbReference type="GO" id="GO:0005524">
    <property type="term" value="F:ATP binding"/>
    <property type="evidence" value="ECO:0007669"/>
    <property type="project" value="UniProtKB-UniRule"/>
</dbReference>
<dbReference type="GO" id="GO:0003921">
    <property type="term" value="F:GMP synthase activity"/>
    <property type="evidence" value="ECO:0007669"/>
    <property type="project" value="InterPro"/>
</dbReference>
<dbReference type="CDD" id="cd01742">
    <property type="entry name" value="GATase1_GMP_Synthase"/>
    <property type="match status" value="1"/>
</dbReference>
<dbReference type="CDD" id="cd01997">
    <property type="entry name" value="GMP_synthase_C"/>
    <property type="match status" value="1"/>
</dbReference>
<dbReference type="FunFam" id="3.30.300.10:FF:000002">
    <property type="entry name" value="GMP synthase [glutamine-hydrolyzing]"/>
    <property type="match status" value="1"/>
</dbReference>
<dbReference type="FunFam" id="3.40.50.620:FF:000001">
    <property type="entry name" value="GMP synthase [glutamine-hydrolyzing]"/>
    <property type="match status" value="1"/>
</dbReference>
<dbReference type="FunFam" id="3.40.50.880:FF:000001">
    <property type="entry name" value="GMP synthase [glutamine-hydrolyzing]"/>
    <property type="match status" value="1"/>
</dbReference>
<dbReference type="Gene3D" id="3.30.300.10">
    <property type="match status" value="1"/>
</dbReference>
<dbReference type="Gene3D" id="3.40.50.880">
    <property type="match status" value="1"/>
</dbReference>
<dbReference type="Gene3D" id="3.40.50.620">
    <property type="entry name" value="HUPs"/>
    <property type="match status" value="1"/>
</dbReference>
<dbReference type="HAMAP" id="MF_00344">
    <property type="entry name" value="GMP_synthase"/>
    <property type="match status" value="1"/>
</dbReference>
<dbReference type="InterPro" id="IPR029062">
    <property type="entry name" value="Class_I_gatase-like"/>
</dbReference>
<dbReference type="InterPro" id="IPR017926">
    <property type="entry name" value="GATASE"/>
</dbReference>
<dbReference type="InterPro" id="IPR001674">
    <property type="entry name" value="GMP_synth_C"/>
</dbReference>
<dbReference type="InterPro" id="IPR004739">
    <property type="entry name" value="GMP_synth_GATase"/>
</dbReference>
<dbReference type="InterPro" id="IPR022955">
    <property type="entry name" value="GMP_synthase"/>
</dbReference>
<dbReference type="InterPro" id="IPR025777">
    <property type="entry name" value="GMPS_ATP_PPase_dom"/>
</dbReference>
<dbReference type="InterPro" id="IPR022310">
    <property type="entry name" value="NAD/GMP_synthase"/>
</dbReference>
<dbReference type="InterPro" id="IPR014729">
    <property type="entry name" value="Rossmann-like_a/b/a_fold"/>
</dbReference>
<dbReference type="NCBIfam" id="TIGR00884">
    <property type="entry name" value="guaA_Cterm"/>
    <property type="match status" value="1"/>
</dbReference>
<dbReference type="NCBIfam" id="TIGR00888">
    <property type="entry name" value="guaA_Nterm"/>
    <property type="match status" value="1"/>
</dbReference>
<dbReference type="NCBIfam" id="NF000848">
    <property type="entry name" value="PRK00074.1"/>
    <property type="match status" value="1"/>
</dbReference>
<dbReference type="PANTHER" id="PTHR11922:SF2">
    <property type="entry name" value="GMP SYNTHASE [GLUTAMINE-HYDROLYZING]"/>
    <property type="match status" value="1"/>
</dbReference>
<dbReference type="PANTHER" id="PTHR11922">
    <property type="entry name" value="GMP SYNTHASE-RELATED"/>
    <property type="match status" value="1"/>
</dbReference>
<dbReference type="Pfam" id="PF00117">
    <property type="entry name" value="GATase"/>
    <property type="match status" value="1"/>
</dbReference>
<dbReference type="Pfam" id="PF00958">
    <property type="entry name" value="GMP_synt_C"/>
    <property type="match status" value="1"/>
</dbReference>
<dbReference type="Pfam" id="PF02540">
    <property type="entry name" value="NAD_synthase"/>
    <property type="match status" value="1"/>
</dbReference>
<dbReference type="PRINTS" id="PR00099">
    <property type="entry name" value="CPSGATASE"/>
</dbReference>
<dbReference type="PRINTS" id="PR00096">
    <property type="entry name" value="GATASE"/>
</dbReference>
<dbReference type="SUPFAM" id="SSF52402">
    <property type="entry name" value="Adenine nucleotide alpha hydrolases-like"/>
    <property type="match status" value="1"/>
</dbReference>
<dbReference type="SUPFAM" id="SSF52317">
    <property type="entry name" value="Class I glutamine amidotransferase-like"/>
    <property type="match status" value="1"/>
</dbReference>
<dbReference type="SUPFAM" id="SSF54810">
    <property type="entry name" value="GMP synthetase C-terminal dimerisation domain"/>
    <property type="match status" value="1"/>
</dbReference>
<dbReference type="PROSITE" id="PS51273">
    <property type="entry name" value="GATASE_TYPE_1"/>
    <property type="match status" value="1"/>
</dbReference>
<dbReference type="PROSITE" id="PS51553">
    <property type="entry name" value="GMPS_ATP_PPASE"/>
    <property type="match status" value="1"/>
</dbReference>
<feature type="chain" id="PRO_0000229433" description="GMP synthase [glutamine-hydrolyzing]">
    <location>
        <begin position="1"/>
        <end position="523"/>
    </location>
</feature>
<feature type="domain" description="Glutamine amidotransferase type-1" evidence="1">
    <location>
        <begin position="8"/>
        <end position="205"/>
    </location>
</feature>
<feature type="domain" description="GMPS ATP-PPase" evidence="1">
    <location>
        <begin position="206"/>
        <end position="398"/>
    </location>
</feature>
<feature type="active site" description="Nucleophile" evidence="1">
    <location>
        <position position="85"/>
    </location>
</feature>
<feature type="active site" evidence="1">
    <location>
        <position position="179"/>
    </location>
</feature>
<feature type="active site" evidence="1">
    <location>
        <position position="181"/>
    </location>
</feature>
<feature type="binding site" evidence="1">
    <location>
        <begin position="233"/>
        <end position="239"/>
    </location>
    <ligand>
        <name>ATP</name>
        <dbReference type="ChEBI" id="CHEBI:30616"/>
    </ligand>
</feature>
<evidence type="ECO:0000255" key="1">
    <source>
        <dbReference type="HAMAP-Rule" id="MF_00344"/>
    </source>
</evidence>
<keyword id="KW-0067">ATP-binding</keyword>
<keyword id="KW-0315">Glutamine amidotransferase</keyword>
<keyword id="KW-0332">GMP biosynthesis</keyword>
<keyword id="KW-0436">Ligase</keyword>
<keyword id="KW-0547">Nucleotide-binding</keyword>
<keyword id="KW-0658">Purine biosynthesis</keyword>
<proteinExistence type="inferred from homology"/>
<reference key="1">
    <citation type="journal article" date="2005" name="J. Bacteriol.">
        <title>Genomic sequence of an otitis media isolate of nontypeable Haemophilus influenzae: comparative study with H. influenzae serotype d, strain KW20.</title>
        <authorList>
            <person name="Harrison A."/>
            <person name="Dyer D.W."/>
            <person name="Gillaspy A."/>
            <person name="Ray W.C."/>
            <person name="Mungur R."/>
            <person name="Carson M.B."/>
            <person name="Zhong H."/>
            <person name="Gipson J."/>
            <person name="Gipson M."/>
            <person name="Johnson L.S."/>
            <person name="Lewis L."/>
            <person name="Bakaletz L.O."/>
            <person name="Munson R.S. Jr."/>
        </authorList>
    </citation>
    <scope>NUCLEOTIDE SEQUENCE [LARGE SCALE GENOMIC DNA]</scope>
    <source>
        <strain>86-028NP</strain>
    </source>
</reference>
<protein>
    <recommendedName>
        <fullName evidence="1">GMP synthase [glutamine-hydrolyzing]</fullName>
        <ecNumber evidence="1">6.3.5.2</ecNumber>
    </recommendedName>
    <alternativeName>
        <fullName evidence="1">GMP synthetase</fullName>
    </alternativeName>
    <alternativeName>
        <fullName evidence="1">Glutamine amidotransferase</fullName>
    </alternativeName>
</protein>
<name>GUAA_HAEI8</name>
<accession>Q4QNW4</accession>
<sequence length="523" mass="58151">MTNIHNHKILILDFGSQYTQLIARRVREIGVYCELWAWDVTEQQIREFAPTGIILSGSPESTTEENSPRAPEYVFNASVPVLGICYGMQTMAMQLGGLTETSDHREFGYASVSLENSTALFANLNDNSTASEPKLDVWMSHGDKVTRLPENFKVTGTTPTCPIAAMSDENRRFYGVQFHPEVTHTKKGLELLTNFVVNICGCETKWTAENIIEDAVARIKEQVGDDEVILGLSGGVDSSVVALLLHRAIGKNLHCVFVDNGLLRLHEGDQVMEMFGDKFGLNITRVDAESRFLGELAGVSDPEAKRKIIGKVFVDVFDDESKKLTNVKWLAQGTIYPDVIESAASKTGKAHVIKSHHNVGGLPDYMKLGLVEPLRELFKDEVRKIGLALGLPAEMINRHPFPGPGLGVRVLGEVKKEYCDLLRRADAIFIEELRNSGWYEKTSQAFSVFLPVKSVGVMGDGRKYDWVISLRAVETIDFMTAHWAHLPYDLLGKVSNRIINEVNGISRVVYDISGKPPATIEWE</sequence>